<dbReference type="EMBL" id="CP000612">
    <property type="protein sequence ID" value="ABO48777.1"/>
    <property type="molecule type" value="Genomic_DNA"/>
</dbReference>
<dbReference type="RefSeq" id="WP_011876617.1">
    <property type="nucleotide sequence ID" value="NC_009253.1"/>
</dbReference>
<dbReference type="SMR" id="A4J124"/>
<dbReference type="STRING" id="349161.Dred_0228"/>
<dbReference type="KEGG" id="drm:Dred_0228"/>
<dbReference type="eggNOG" id="COG0199">
    <property type="taxonomic scope" value="Bacteria"/>
</dbReference>
<dbReference type="HOGENOM" id="CLU_139869_3_0_9"/>
<dbReference type="OrthoDB" id="9810484at2"/>
<dbReference type="Proteomes" id="UP000001556">
    <property type="component" value="Chromosome"/>
</dbReference>
<dbReference type="GO" id="GO:0005737">
    <property type="term" value="C:cytoplasm"/>
    <property type="evidence" value="ECO:0007669"/>
    <property type="project" value="UniProtKB-ARBA"/>
</dbReference>
<dbReference type="GO" id="GO:0015935">
    <property type="term" value="C:small ribosomal subunit"/>
    <property type="evidence" value="ECO:0007669"/>
    <property type="project" value="TreeGrafter"/>
</dbReference>
<dbReference type="GO" id="GO:0019843">
    <property type="term" value="F:rRNA binding"/>
    <property type="evidence" value="ECO:0007669"/>
    <property type="project" value="UniProtKB-UniRule"/>
</dbReference>
<dbReference type="GO" id="GO:0003735">
    <property type="term" value="F:structural constituent of ribosome"/>
    <property type="evidence" value="ECO:0007669"/>
    <property type="project" value="InterPro"/>
</dbReference>
<dbReference type="GO" id="GO:0008270">
    <property type="term" value="F:zinc ion binding"/>
    <property type="evidence" value="ECO:0007669"/>
    <property type="project" value="UniProtKB-UniRule"/>
</dbReference>
<dbReference type="GO" id="GO:0006412">
    <property type="term" value="P:translation"/>
    <property type="evidence" value="ECO:0007669"/>
    <property type="project" value="UniProtKB-UniRule"/>
</dbReference>
<dbReference type="FunFam" id="4.10.830.10:FF:000001">
    <property type="entry name" value="30S ribosomal protein S14 type Z"/>
    <property type="match status" value="1"/>
</dbReference>
<dbReference type="Gene3D" id="4.10.830.10">
    <property type="entry name" value="30s Ribosomal Protein S14, Chain N"/>
    <property type="match status" value="1"/>
</dbReference>
<dbReference type="HAMAP" id="MF_01364_B">
    <property type="entry name" value="Ribosomal_uS14_2_B"/>
    <property type="match status" value="1"/>
</dbReference>
<dbReference type="InterPro" id="IPR001209">
    <property type="entry name" value="Ribosomal_uS14"/>
</dbReference>
<dbReference type="InterPro" id="IPR023053">
    <property type="entry name" value="Ribosomal_uS14_bact"/>
</dbReference>
<dbReference type="InterPro" id="IPR018271">
    <property type="entry name" value="Ribosomal_uS14_CS"/>
</dbReference>
<dbReference type="InterPro" id="IPR043140">
    <property type="entry name" value="Ribosomal_uS14_sf"/>
</dbReference>
<dbReference type="NCBIfam" id="NF005974">
    <property type="entry name" value="PRK08061.1"/>
    <property type="match status" value="1"/>
</dbReference>
<dbReference type="PANTHER" id="PTHR19836">
    <property type="entry name" value="30S RIBOSOMAL PROTEIN S14"/>
    <property type="match status" value="1"/>
</dbReference>
<dbReference type="PANTHER" id="PTHR19836:SF19">
    <property type="entry name" value="SMALL RIBOSOMAL SUBUNIT PROTEIN US14M"/>
    <property type="match status" value="1"/>
</dbReference>
<dbReference type="Pfam" id="PF00253">
    <property type="entry name" value="Ribosomal_S14"/>
    <property type="match status" value="1"/>
</dbReference>
<dbReference type="SUPFAM" id="SSF57716">
    <property type="entry name" value="Glucocorticoid receptor-like (DNA-binding domain)"/>
    <property type="match status" value="1"/>
</dbReference>
<dbReference type="PROSITE" id="PS00527">
    <property type="entry name" value="RIBOSOMAL_S14"/>
    <property type="match status" value="1"/>
</dbReference>
<protein>
    <recommendedName>
        <fullName evidence="1">Small ribosomal subunit protein uS14</fullName>
    </recommendedName>
    <alternativeName>
        <fullName evidence="2">30S ribosomal protein S14 type Z</fullName>
    </alternativeName>
</protein>
<evidence type="ECO:0000255" key="1">
    <source>
        <dbReference type="HAMAP-Rule" id="MF_01364"/>
    </source>
</evidence>
<evidence type="ECO:0000305" key="2"/>
<gene>
    <name evidence="1" type="primary">rpsZ</name>
    <name evidence="1" type="synonym">rpsN</name>
    <name type="ordered locus">Dred_0228</name>
</gene>
<proteinExistence type="inferred from homology"/>
<organism>
    <name type="scientific">Desulforamulus reducens (strain ATCC BAA-1160 / DSM 100696 / MI-1)</name>
    <name type="common">Desulfotomaculum reducens</name>
    <dbReference type="NCBI Taxonomy" id="349161"/>
    <lineage>
        <taxon>Bacteria</taxon>
        <taxon>Bacillati</taxon>
        <taxon>Bacillota</taxon>
        <taxon>Clostridia</taxon>
        <taxon>Eubacteriales</taxon>
        <taxon>Peptococcaceae</taxon>
        <taxon>Desulforamulus</taxon>
    </lineage>
</organism>
<reference key="1">
    <citation type="submission" date="2007-03" db="EMBL/GenBank/DDBJ databases">
        <title>Complete sequence of Desulfotomaculum reducens MI-1.</title>
        <authorList>
            <consortium name="US DOE Joint Genome Institute"/>
            <person name="Copeland A."/>
            <person name="Lucas S."/>
            <person name="Lapidus A."/>
            <person name="Barry K."/>
            <person name="Detter J.C."/>
            <person name="Glavina del Rio T."/>
            <person name="Hammon N."/>
            <person name="Israni S."/>
            <person name="Dalin E."/>
            <person name="Tice H."/>
            <person name="Pitluck S."/>
            <person name="Sims D."/>
            <person name="Brettin T."/>
            <person name="Bruce D."/>
            <person name="Han C."/>
            <person name="Tapia R."/>
            <person name="Schmutz J."/>
            <person name="Larimer F."/>
            <person name="Land M."/>
            <person name="Hauser L."/>
            <person name="Kyrpides N."/>
            <person name="Kim E."/>
            <person name="Tebo B.M."/>
            <person name="Richardson P."/>
        </authorList>
    </citation>
    <scope>NUCLEOTIDE SEQUENCE [LARGE SCALE GENOMIC DNA]</scope>
    <source>
        <strain>ATCC BAA-1160 / DSM 100696 / MI-1</strain>
    </source>
</reference>
<keyword id="KW-0479">Metal-binding</keyword>
<keyword id="KW-1185">Reference proteome</keyword>
<keyword id="KW-0687">Ribonucleoprotein</keyword>
<keyword id="KW-0689">Ribosomal protein</keyword>
<keyword id="KW-0694">RNA-binding</keyword>
<keyword id="KW-0699">rRNA-binding</keyword>
<keyword id="KW-0862">Zinc</keyword>
<name>RS14Z_DESRM</name>
<comment type="function">
    <text evidence="1">Binds 16S rRNA, required for the assembly of 30S particles and may also be responsible for determining the conformation of the 16S rRNA at the A site.</text>
</comment>
<comment type="cofactor">
    <cofactor evidence="1">
        <name>Zn(2+)</name>
        <dbReference type="ChEBI" id="CHEBI:29105"/>
    </cofactor>
    <text evidence="1">Binds 1 zinc ion per subunit.</text>
</comment>
<comment type="subunit">
    <text evidence="1">Part of the 30S ribosomal subunit. Contacts proteins S3 and S10.</text>
</comment>
<comment type="similarity">
    <text evidence="1">Belongs to the universal ribosomal protein uS14 family. Zinc-binding uS14 subfamily.</text>
</comment>
<sequence length="61" mass="7041">MAKKSMINKANAPQKFTVRGHNRCKLCGRPHGYMRKFGICRICFRELAYRGEIPGVKKASW</sequence>
<feature type="chain" id="PRO_1000073396" description="Small ribosomal subunit protein uS14">
    <location>
        <begin position="1"/>
        <end position="61"/>
    </location>
</feature>
<feature type="binding site" evidence="1">
    <location>
        <position position="24"/>
    </location>
    <ligand>
        <name>Zn(2+)</name>
        <dbReference type="ChEBI" id="CHEBI:29105"/>
    </ligand>
</feature>
<feature type="binding site" evidence="1">
    <location>
        <position position="27"/>
    </location>
    <ligand>
        <name>Zn(2+)</name>
        <dbReference type="ChEBI" id="CHEBI:29105"/>
    </ligand>
</feature>
<feature type="binding site" evidence="1">
    <location>
        <position position="40"/>
    </location>
    <ligand>
        <name>Zn(2+)</name>
        <dbReference type="ChEBI" id="CHEBI:29105"/>
    </ligand>
</feature>
<feature type="binding site" evidence="1">
    <location>
        <position position="43"/>
    </location>
    <ligand>
        <name>Zn(2+)</name>
        <dbReference type="ChEBI" id="CHEBI:29105"/>
    </ligand>
</feature>
<accession>A4J124</accession>